<keyword id="KW-0963">Cytoplasm</keyword>
<keyword id="KW-0444">Lipid biosynthesis</keyword>
<keyword id="KW-0443">Lipid metabolism</keyword>
<keyword id="KW-0520">NAD</keyword>
<keyword id="KW-0521">NADP</keyword>
<keyword id="KW-0547">Nucleotide-binding</keyword>
<keyword id="KW-0560">Oxidoreductase</keyword>
<keyword id="KW-0594">Phospholipid biosynthesis</keyword>
<keyword id="KW-1208">Phospholipid metabolism</keyword>
<accession>C0Q1U2</accession>
<proteinExistence type="inferred from homology"/>
<evidence type="ECO:0000255" key="1">
    <source>
        <dbReference type="HAMAP-Rule" id="MF_00394"/>
    </source>
</evidence>
<comment type="function">
    <text evidence="1">Catalyzes the reduction of the glycolytic intermediate dihydroxyacetone phosphate (DHAP) to sn-glycerol 3-phosphate (G3P), the key precursor for phospholipid synthesis.</text>
</comment>
<comment type="catalytic activity">
    <reaction evidence="1">
        <text>sn-glycerol 3-phosphate + NAD(+) = dihydroxyacetone phosphate + NADH + H(+)</text>
        <dbReference type="Rhea" id="RHEA:11092"/>
        <dbReference type="ChEBI" id="CHEBI:15378"/>
        <dbReference type="ChEBI" id="CHEBI:57540"/>
        <dbReference type="ChEBI" id="CHEBI:57597"/>
        <dbReference type="ChEBI" id="CHEBI:57642"/>
        <dbReference type="ChEBI" id="CHEBI:57945"/>
        <dbReference type="EC" id="1.1.1.94"/>
    </reaction>
    <physiologicalReaction direction="right-to-left" evidence="1">
        <dbReference type="Rhea" id="RHEA:11094"/>
    </physiologicalReaction>
</comment>
<comment type="catalytic activity">
    <reaction evidence="1">
        <text>sn-glycerol 3-phosphate + NADP(+) = dihydroxyacetone phosphate + NADPH + H(+)</text>
        <dbReference type="Rhea" id="RHEA:11096"/>
        <dbReference type="ChEBI" id="CHEBI:15378"/>
        <dbReference type="ChEBI" id="CHEBI:57597"/>
        <dbReference type="ChEBI" id="CHEBI:57642"/>
        <dbReference type="ChEBI" id="CHEBI:57783"/>
        <dbReference type="ChEBI" id="CHEBI:58349"/>
        <dbReference type="EC" id="1.1.1.94"/>
    </reaction>
    <physiologicalReaction direction="right-to-left" evidence="1">
        <dbReference type="Rhea" id="RHEA:11098"/>
    </physiologicalReaction>
</comment>
<comment type="pathway">
    <text evidence="1">Membrane lipid metabolism; glycerophospholipid metabolism.</text>
</comment>
<comment type="subcellular location">
    <subcellularLocation>
        <location evidence="1">Cytoplasm</location>
    </subcellularLocation>
</comment>
<comment type="similarity">
    <text evidence="1">Belongs to the NAD-dependent glycerol-3-phosphate dehydrogenase family.</text>
</comment>
<name>GPDA_SALPC</name>
<organism>
    <name type="scientific">Salmonella paratyphi C (strain RKS4594)</name>
    <dbReference type="NCBI Taxonomy" id="476213"/>
    <lineage>
        <taxon>Bacteria</taxon>
        <taxon>Pseudomonadati</taxon>
        <taxon>Pseudomonadota</taxon>
        <taxon>Gammaproteobacteria</taxon>
        <taxon>Enterobacterales</taxon>
        <taxon>Enterobacteriaceae</taxon>
        <taxon>Salmonella</taxon>
    </lineage>
</organism>
<feature type="chain" id="PRO_1000190169" description="Glycerol-3-phosphate dehydrogenase [NAD(P)+]">
    <location>
        <begin position="1"/>
        <end position="339"/>
    </location>
</feature>
<feature type="active site" description="Proton acceptor" evidence="1">
    <location>
        <position position="195"/>
    </location>
</feature>
<feature type="binding site" evidence="1">
    <location>
        <position position="15"/>
    </location>
    <ligand>
        <name>NADPH</name>
        <dbReference type="ChEBI" id="CHEBI:57783"/>
    </ligand>
</feature>
<feature type="binding site" evidence="1">
    <location>
        <position position="16"/>
    </location>
    <ligand>
        <name>NADPH</name>
        <dbReference type="ChEBI" id="CHEBI:57783"/>
    </ligand>
</feature>
<feature type="binding site" evidence="1">
    <location>
        <position position="36"/>
    </location>
    <ligand>
        <name>NADPH</name>
        <dbReference type="ChEBI" id="CHEBI:57783"/>
    </ligand>
</feature>
<feature type="binding site" evidence="1">
    <location>
        <position position="110"/>
    </location>
    <ligand>
        <name>NADPH</name>
        <dbReference type="ChEBI" id="CHEBI:57783"/>
    </ligand>
</feature>
<feature type="binding site" evidence="1">
    <location>
        <position position="110"/>
    </location>
    <ligand>
        <name>sn-glycerol 3-phosphate</name>
        <dbReference type="ChEBI" id="CHEBI:57597"/>
    </ligand>
</feature>
<feature type="binding site" evidence="1">
    <location>
        <position position="139"/>
    </location>
    <ligand>
        <name>sn-glycerol 3-phosphate</name>
        <dbReference type="ChEBI" id="CHEBI:57597"/>
    </ligand>
</feature>
<feature type="binding site" evidence="1">
    <location>
        <position position="141"/>
    </location>
    <ligand>
        <name>sn-glycerol 3-phosphate</name>
        <dbReference type="ChEBI" id="CHEBI:57597"/>
    </ligand>
</feature>
<feature type="binding site" evidence="1">
    <location>
        <position position="143"/>
    </location>
    <ligand>
        <name>NADPH</name>
        <dbReference type="ChEBI" id="CHEBI:57783"/>
    </ligand>
</feature>
<feature type="binding site" evidence="1">
    <location>
        <position position="195"/>
    </location>
    <ligand>
        <name>sn-glycerol 3-phosphate</name>
        <dbReference type="ChEBI" id="CHEBI:57597"/>
    </ligand>
</feature>
<feature type="binding site" evidence="1">
    <location>
        <position position="248"/>
    </location>
    <ligand>
        <name>sn-glycerol 3-phosphate</name>
        <dbReference type="ChEBI" id="CHEBI:57597"/>
    </ligand>
</feature>
<feature type="binding site" evidence="1">
    <location>
        <position position="258"/>
    </location>
    <ligand>
        <name>sn-glycerol 3-phosphate</name>
        <dbReference type="ChEBI" id="CHEBI:57597"/>
    </ligand>
</feature>
<feature type="binding site" evidence="1">
    <location>
        <position position="259"/>
    </location>
    <ligand>
        <name>NADPH</name>
        <dbReference type="ChEBI" id="CHEBI:57783"/>
    </ligand>
</feature>
<feature type="binding site" evidence="1">
    <location>
        <position position="259"/>
    </location>
    <ligand>
        <name>sn-glycerol 3-phosphate</name>
        <dbReference type="ChEBI" id="CHEBI:57597"/>
    </ligand>
</feature>
<feature type="binding site" evidence="1">
    <location>
        <position position="260"/>
    </location>
    <ligand>
        <name>sn-glycerol 3-phosphate</name>
        <dbReference type="ChEBI" id="CHEBI:57597"/>
    </ligand>
</feature>
<feature type="binding site" evidence="1">
    <location>
        <position position="283"/>
    </location>
    <ligand>
        <name>NADPH</name>
        <dbReference type="ChEBI" id="CHEBI:57783"/>
    </ligand>
</feature>
<feature type="binding site" evidence="1">
    <location>
        <position position="285"/>
    </location>
    <ligand>
        <name>NADPH</name>
        <dbReference type="ChEBI" id="CHEBI:57783"/>
    </ligand>
</feature>
<protein>
    <recommendedName>
        <fullName evidence="1">Glycerol-3-phosphate dehydrogenase [NAD(P)+]</fullName>
        <ecNumber evidence="1">1.1.1.94</ecNumber>
    </recommendedName>
    <alternativeName>
        <fullName evidence="1">NAD(P)(+)-dependent glycerol-3-phosphate dehydrogenase</fullName>
    </alternativeName>
    <alternativeName>
        <fullName evidence="1">NAD(P)H-dependent dihydroxyacetone-phosphate reductase</fullName>
    </alternativeName>
</protein>
<sequence>MNQSNASMTVIGAGSYGTALAITLARNGHQVVLWGHDPKHIATLEHDRCNVAFLPDVPFPDTLHLESDLATALAASRNILVVVPSHVFSDVLRQIKPLMRPDARLVWATKGLEAETGRLLQDVAREALGDQIPLAVISGPTFAKELAAGLPTAISLASTDETFADDLQQLLHCGKSFRVYINADFIGVQLGGAVKNVIAIGAGMSDGIGFGANARTALITRGLTEMSRLGAALGADPATFMGMAGLGDLVLTCTDNQSRNRRFGMMLGQGMDVKGAQDKIGQVVEGYRNTKEVRELAHRFGVEMPITEEIYQVLYCGKNAREAALTLLGRARKEELSRH</sequence>
<reference key="1">
    <citation type="journal article" date="2009" name="PLoS ONE">
        <title>Salmonella paratyphi C: genetic divergence from Salmonella choleraesuis and pathogenic convergence with Salmonella typhi.</title>
        <authorList>
            <person name="Liu W.-Q."/>
            <person name="Feng Y."/>
            <person name="Wang Y."/>
            <person name="Zou Q.-H."/>
            <person name="Chen F."/>
            <person name="Guo J.-T."/>
            <person name="Peng Y.-H."/>
            <person name="Jin Y."/>
            <person name="Li Y.-G."/>
            <person name="Hu S.-N."/>
            <person name="Johnston R.N."/>
            <person name="Liu G.-R."/>
            <person name="Liu S.-L."/>
        </authorList>
    </citation>
    <scope>NUCLEOTIDE SEQUENCE [LARGE SCALE GENOMIC DNA]</scope>
    <source>
        <strain>RKS4594</strain>
    </source>
</reference>
<gene>
    <name evidence="1" type="primary">gpsA</name>
    <name type="ordered locus">SPC_3782</name>
</gene>
<dbReference type="EC" id="1.1.1.94" evidence="1"/>
<dbReference type="EMBL" id="CP000857">
    <property type="protein sequence ID" value="ACN47858.1"/>
    <property type="molecule type" value="Genomic_DNA"/>
</dbReference>
<dbReference type="RefSeq" id="WP_001076596.1">
    <property type="nucleotide sequence ID" value="NC_012125.1"/>
</dbReference>
<dbReference type="SMR" id="C0Q1U2"/>
<dbReference type="KEGG" id="sei:SPC_3782"/>
<dbReference type="HOGENOM" id="CLU_033449_0_2_6"/>
<dbReference type="UniPathway" id="UPA00940"/>
<dbReference type="Proteomes" id="UP000001599">
    <property type="component" value="Chromosome"/>
</dbReference>
<dbReference type="GO" id="GO:0005829">
    <property type="term" value="C:cytosol"/>
    <property type="evidence" value="ECO:0007669"/>
    <property type="project" value="TreeGrafter"/>
</dbReference>
<dbReference type="GO" id="GO:0047952">
    <property type="term" value="F:glycerol-3-phosphate dehydrogenase [NAD(P)+] activity"/>
    <property type="evidence" value="ECO:0007669"/>
    <property type="project" value="UniProtKB-UniRule"/>
</dbReference>
<dbReference type="GO" id="GO:0051287">
    <property type="term" value="F:NAD binding"/>
    <property type="evidence" value="ECO:0007669"/>
    <property type="project" value="InterPro"/>
</dbReference>
<dbReference type="GO" id="GO:0005975">
    <property type="term" value="P:carbohydrate metabolic process"/>
    <property type="evidence" value="ECO:0007669"/>
    <property type="project" value="InterPro"/>
</dbReference>
<dbReference type="GO" id="GO:0046167">
    <property type="term" value="P:glycerol-3-phosphate biosynthetic process"/>
    <property type="evidence" value="ECO:0007669"/>
    <property type="project" value="UniProtKB-UniRule"/>
</dbReference>
<dbReference type="GO" id="GO:0046168">
    <property type="term" value="P:glycerol-3-phosphate catabolic process"/>
    <property type="evidence" value="ECO:0007669"/>
    <property type="project" value="InterPro"/>
</dbReference>
<dbReference type="GO" id="GO:0046474">
    <property type="term" value="P:glycerophospholipid biosynthetic process"/>
    <property type="evidence" value="ECO:0007669"/>
    <property type="project" value="TreeGrafter"/>
</dbReference>
<dbReference type="FunFam" id="1.10.1040.10:FF:000001">
    <property type="entry name" value="Glycerol-3-phosphate dehydrogenase [NAD(P)+]"/>
    <property type="match status" value="1"/>
</dbReference>
<dbReference type="FunFam" id="3.40.50.720:FF:000019">
    <property type="entry name" value="Glycerol-3-phosphate dehydrogenase [NAD(P)+]"/>
    <property type="match status" value="1"/>
</dbReference>
<dbReference type="Gene3D" id="1.10.1040.10">
    <property type="entry name" value="N-(1-d-carboxylethyl)-l-norvaline Dehydrogenase, domain 2"/>
    <property type="match status" value="1"/>
</dbReference>
<dbReference type="Gene3D" id="3.40.50.720">
    <property type="entry name" value="NAD(P)-binding Rossmann-like Domain"/>
    <property type="match status" value="1"/>
</dbReference>
<dbReference type="HAMAP" id="MF_00394">
    <property type="entry name" value="NAD_Glyc3P_dehydrog"/>
    <property type="match status" value="1"/>
</dbReference>
<dbReference type="InterPro" id="IPR008927">
    <property type="entry name" value="6-PGluconate_DH-like_C_sf"/>
</dbReference>
<dbReference type="InterPro" id="IPR013328">
    <property type="entry name" value="6PGD_dom2"/>
</dbReference>
<dbReference type="InterPro" id="IPR006168">
    <property type="entry name" value="G3P_DH_NAD-dep"/>
</dbReference>
<dbReference type="InterPro" id="IPR006109">
    <property type="entry name" value="G3P_DH_NAD-dep_C"/>
</dbReference>
<dbReference type="InterPro" id="IPR011128">
    <property type="entry name" value="G3P_DH_NAD-dep_N"/>
</dbReference>
<dbReference type="InterPro" id="IPR036291">
    <property type="entry name" value="NAD(P)-bd_dom_sf"/>
</dbReference>
<dbReference type="NCBIfam" id="NF000939">
    <property type="entry name" value="PRK00094.1-1"/>
    <property type="match status" value="1"/>
</dbReference>
<dbReference type="NCBIfam" id="NF000940">
    <property type="entry name" value="PRK00094.1-2"/>
    <property type="match status" value="1"/>
</dbReference>
<dbReference type="NCBIfam" id="NF000942">
    <property type="entry name" value="PRK00094.1-4"/>
    <property type="match status" value="1"/>
</dbReference>
<dbReference type="PANTHER" id="PTHR11728">
    <property type="entry name" value="GLYCEROL-3-PHOSPHATE DEHYDROGENASE"/>
    <property type="match status" value="1"/>
</dbReference>
<dbReference type="PANTHER" id="PTHR11728:SF1">
    <property type="entry name" value="GLYCEROL-3-PHOSPHATE DEHYDROGENASE [NAD(+)] 2, CHLOROPLASTIC"/>
    <property type="match status" value="1"/>
</dbReference>
<dbReference type="Pfam" id="PF07479">
    <property type="entry name" value="NAD_Gly3P_dh_C"/>
    <property type="match status" value="1"/>
</dbReference>
<dbReference type="Pfam" id="PF01210">
    <property type="entry name" value="NAD_Gly3P_dh_N"/>
    <property type="match status" value="1"/>
</dbReference>
<dbReference type="PIRSF" id="PIRSF000114">
    <property type="entry name" value="Glycerol-3-P_dh"/>
    <property type="match status" value="1"/>
</dbReference>
<dbReference type="PRINTS" id="PR00077">
    <property type="entry name" value="GPDHDRGNASE"/>
</dbReference>
<dbReference type="SUPFAM" id="SSF48179">
    <property type="entry name" value="6-phosphogluconate dehydrogenase C-terminal domain-like"/>
    <property type="match status" value="1"/>
</dbReference>
<dbReference type="SUPFAM" id="SSF51735">
    <property type="entry name" value="NAD(P)-binding Rossmann-fold domains"/>
    <property type="match status" value="1"/>
</dbReference>
<dbReference type="PROSITE" id="PS00957">
    <property type="entry name" value="NAD_G3PDH"/>
    <property type="match status" value="1"/>
</dbReference>